<organism>
    <name type="scientific">Spinacia oleracea</name>
    <name type="common">Spinach</name>
    <dbReference type="NCBI Taxonomy" id="3562"/>
    <lineage>
        <taxon>Eukaryota</taxon>
        <taxon>Viridiplantae</taxon>
        <taxon>Streptophyta</taxon>
        <taxon>Embryophyta</taxon>
        <taxon>Tracheophyta</taxon>
        <taxon>Spermatophyta</taxon>
        <taxon>Magnoliopsida</taxon>
        <taxon>eudicotyledons</taxon>
        <taxon>Gunneridae</taxon>
        <taxon>Pentapetalae</taxon>
        <taxon>Caryophyllales</taxon>
        <taxon>Chenopodiaceae</taxon>
        <taxon>Chenopodioideae</taxon>
        <taxon>Anserineae</taxon>
        <taxon>Spinacia</taxon>
    </lineage>
</organism>
<comment type="function">
    <text evidence="1">Involved in protein precursor import into chloroplasts. May be part of an intermediate translocation complex acting as a protein-conducting channel at the inner envelope.</text>
</comment>
<comment type="subunit">
    <text evidence="1">Part of the Tic complex.</text>
</comment>
<comment type="subcellular location">
    <subcellularLocation>
        <location evidence="1">Plastid</location>
        <location evidence="1">Chloroplast inner membrane</location>
        <topology evidence="2">Multi-pass membrane protein</topology>
    </subcellularLocation>
</comment>
<comment type="miscellaneous">
    <text>There is a partial copy of the N-terminus (positions 1-481) of ycf1 in the inverted repeat (CAB88779).</text>
</comment>
<comment type="similarity">
    <text evidence="4">Belongs to the TIC214 family.</text>
</comment>
<reference key="1">
    <citation type="journal article" date="2001" name="Plant Mol. Biol.">
        <title>The plastid chromosome of spinach (Spinacia oleracea): complete nucleotide sequence and gene organization.</title>
        <authorList>
            <person name="Schmitz-Linneweber C."/>
            <person name="Maier R.M."/>
            <person name="Alcaraz J.-P."/>
            <person name="Cottet A."/>
            <person name="Herrmann R.G."/>
            <person name="Mache R."/>
        </authorList>
    </citation>
    <scope>NUCLEOTIDE SEQUENCE [LARGE SCALE GENOMIC DNA]</scope>
    <source>
        <strain>cv. Geant d'hiver</strain>
        <strain>cv. Monatol</strain>
    </source>
</reference>
<sequence length="1833" mass="218472">MIFQSFLLGNLVSLCMKIINSVVVVGLYYGFLTTFSIGPSYLFLLRAQVMEEGEEGTEKKVSGTTGFIMGQLMMFISIYYTPLHLALGRPHTITVLALPYLLFHFFWNNHKHFFDYGSTSRNSMRNLSIQCVFLNNLIFQLFNYFILPSSMLARLVNIYMFRCNNKMLFVTSSFVGWLIGHILFMKWVGLVLVWIQQNNSIRSNKYLVSELRNSMARIFSILFFITCVYYLGRMPSPIFTNKLKQMLETNEIEEETNLEIEKTSETKETKQEEEGFTEEDPSPSLFSEEKEDPDKIDETEKIRVNGKDKTKDEFHLKEACYKNSPTSYSGNQDISKLEILKKEKKILFWFQKPLIFLLFDYKRWNRPMRYIKNNRFENAVRNEMSQYFFYTCQNDGKQRISFTYPPSLSIFWEMIQRKISLATTEKFLYDDELYNYWIYTNEQKKNSLSNEFANRITVLDKGLFYIDVLDKKTRLCKSKNEYLQKDHDPLLNGSYRGIIKKTLLPFINNDETTVKKLIDEIFINKIHSVLGNCNNYQEFEYKKDPFKKNPISSKIRHFVTLMSQFDGESTFNQKGISLLSEHKQICSEDPEIFFKFLVDTIIADSFTQTIPKESIGIKEISKKVPHWSYQLIDESEQEEMENEKQVSWPHQIRSRSGKEVVFFTDKQENTDNPTPNTADISEQADEVVLTRYPQESDFRRDIIKGSMRSQRRKIVIWELFQANIHSPLFLDRTNKSSFFSITFSRLIKRIFKNYMGKNPELDISNYKEEELKKKEKAKEHKKDKEKKQEQIRLDIAETWDTIPGAQIIRSLILLTQSILRKYILLPLLITGKNIGRILLFQLPEWSDDFKEWTSEMHIKCTYNGVQLSEKEFPKNWLTDGMQIKILSPFCLKPWHKSMIRPYHQDKKKKEQNQIDAFCFLTVVGLETDIPFGPPRKRPSFFQPIFKQLDKKIEKLIKGNFQVRKRLKEKILFFLKLQNETNNWIIEIFPFFKKIIRKMSTVNTIGVFGLKEASSEIKSEKDSRIKNHMIHESSVQIRFLNQTNSSVTEKKMKDLANRTRIIKNKIEKISNDKLKMSPKKTRYGTKNLGQILKRRNARLIRNSNYILKFFRERIYGDIFLYIINIPKINTQLFLESTKNGIDKSIYNNESITKTNKNRIQFISTINKKFLPFLSTSKNNSKIISDFSFLSQAYVFYKLSQAKILNLYKLRLVLQYRGISLFLKNEIKDFFGTQGITNSELKTKKLPNSGMNQWKNWLKLKNNYQYNLSQLKWSRLVPQKWRNRVTEHCEVENTNLYQNEELINSKKHLLLLPDQKYNFQKNYRYDVLSYKFFNYKNKNDSYRYSYGLPFQVNKNQEFSYTYNYNINNNKFIDMWWNIPISNFSYLEKTKIMDIDKNIDRKYLDFKILDFSLRNKIDIEDWIDISTSINENTKTEPRNYQIVEKINKKSLVYSTIYQEIKQSDQKNKLFDWMGMNEKILSRPISNLEFWFFSEFFSFYNAYKMKPWVIPINLLFSNSNVSEKFSKNKSINRKKKTNPFIPSNEKKSFELENRNQDEKELVSKEDLGSYVQENYEKDIEEDYISFIDIKKPIKQKQPKSVIEAEFDLFLKRYLLFQLKWADSLNEKLMDNIQVYCLVLRLINPIEILISSIERKELSMDIMLDRKDFNCPNWKQKRVLIIEPIRLSIRGDGQFLLYQTIGISLVHKSKHQNNQKRYSENVDKKFLGERNKNNFDLLAPENLLSPRRRRELRILLCLNSRNNNGVNTNPMENRVKNCNQFFDEKKDLDRDKNTLRNLKFFLWPNYRLEDLACMNRFWFDTNNGSRFSILRIHMYPQF</sequence>
<geneLocation type="chloroplast"/>
<protein>
    <recommendedName>
        <fullName evidence="1">Protein TIC 214</fullName>
    </recommendedName>
    <alternativeName>
        <fullName evidence="1">Translocon at the inner envelope membrane of chloroplasts 214</fullName>
        <shortName evidence="1">AtTIC214</shortName>
    </alternativeName>
</protein>
<keyword id="KW-0150">Chloroplast</keyword>
<keyword id="KW-0472">Membrane</keyword>
<keyword id="KW-0934">Plastid</keyword>
<keyword id="KW-1001">Plastid inner membrane</keyword>
<keyword id="KW-0653">Protein transport</keyword>
<keyword id="KW-1185">Reference proteome</keyword>
<keyword id="KW-0812">Transmembrane</keyword>
<keyword id="KW-1133">Transmembrane helix</keyword>
<keyword id="KW-0813">Transport</keyword>
<evidence type="ECO:0000250" key="1">
    <source>
        <dbReference type="UniProtKB" id="P56785"/>
    </source>
</evidence>
<evidence type="ECO:0000255" key="2"/>
<evidence type="ECO:0000256" key="3">
    <source>
        <dbReference type="SAM" id="MobiDB-lite"/>
    </source>
</evidence>
<evidence type="ECO:0000305" key="4"/>
<dbReference type="EMBL" id="AJ400848">
    <property type="protein sequence ID" value="CAB88779.1"/>
    <property type="molecule type" value="Genomic_DNA"/>
</dbReference>
<dbReference type="EMBL" id="AJ400848">
    <property type="protein sequence ID" value="CAB88792.1"/>
    <property type="molecule type" value="Genomic_DNA"/>
</dbReference>
<dbReference type="RefSeq" id="NP_054983.1">
    <property type="nucleotide sequence ID" value="NC_002202.1"/>
</dbReference>
<dbReference type="STRING" id="3562.Q9M3J5"/>
<dbReference type="KEGG" id="soe:2715687"/>
<dbReference type="KEGG" id="soe:2715704"/>
<dbReference type="InParanoid" id="Q9M3J5"/>
<dbReference type="OrthoDB" id="1938219at2759"/>
<dbReference type="Proteomes" id="UP001155700">
    <property type="component" value="Chloroplast Pltd"/>
</dbReference>
<dbReference type="GO" id="GO:0009706">
    <property type="term" value="C:chloroplast inner membrane"/>
    <property type="evidence" value="ECO:0007669"/>
    <property type="project" value="UniProtKB-SubCell"/>
</dbReference>
<dbReference type="GO" id="GO:0015031">
    <property type="term" value="P:protein transport"/>
    <property type="evidence" value="ECO:0007669"/>
    <property type="project" value="UniProtKB-KW"/>
</dbReference>
<dbReference type="InterPro" id="IPR008896">
    <property type="entry name" value="TIC214"/>
</dbReference>
<dbReference type="PANTHER" id="PTHR33163:SF40">
    <property type="entry name" value="PROTEIN TIC 214"/>
    <property type="match status" value="1"/>
</dbReference>
<dbReference type="PANTHER" id="PTHR33163">
    <property type="entry name" value="PROTEIN TIC 214-RELATED"/>
    <property type="match status" value="1"/>
</dbReference>
<dbReference type="Pfam" id="PF05758">
    <property type="entry name" value="Ycf1"/>
    <property type="match status" value="1"/>
</dbReference>
<accession>Q9M3J5</accession>
<accession>Q9M3I3</accession>
<name>TI214_SPIOL</name>
<proteinExistence type="inferred from homology"/>
<gene>
    <name evidence="1" type="primary">TIC214</name>
    <name type="synonym">ycf1-A</name>
</gene>
<gene>
    <name evidence="1" type="primary">TIC214</name>
    <name type="synonym">ycf1-B</name>
</gene>
<feature type="chain" id="PRO_0000217306" description="Protein TIC 214">
    <location>
        <begin position="1"/>
        <end position="1833"/>
    </location>
</feature>
<feature type="transmembrane region" description="Helical" evidence="2">
    <location>
        <begin position="18"/>
        <end position="38"/>
    </location>
</feature>
<feature type="transmembrane region" description="Helical" evidence="2">
    <location>
        <begin position="67"/>
        <end position="87"/>
    </location>
</feature>
<feature type="transmembrane region" description="Helical" evidence="2">
    <location>
        <begin position="90"/>
        <end position="110"/>
    </location>
</feature>
<feature type="transmembrane region" description="Helical" evidence="2">
    <location>
        <begin position="127"/>
        <end position="147"/>
    </location>
</feature>
<feature type="transmembrane region" description="Helical" evidence="2">
    <location>
        <begin position="175"/>
        <end position="195"/>
    </location>
</feature>
<feature type="transmembrane region" description="Helical" evidence="2">
    <location>
        <begin position="218"/>
        <end position="238"/>
    </location>
</feature>
<feature type="region of interest" description="Disordered" evidence="3">
    <location>
        <begin position="254"/>
        <end position="301"/>
    </location>
</feature>
<feature type="compositionally biased region" description="Basic and acidic residues" evidence="3">
    <location>
        <begin position="259"/>
        <end position="273"/>
    </location>
</feature>
<feature type="compositionally biased region" description="Basic and acidic residues" evidence="3">
    <location>
        <begin position="292"/>
        <end position="301"/>
    </location>
</feature>